<evidence type="ECO:0000255" key="1">
    <source>
        <dbReference type="HAMAP-Rule" id="MF_00003"/>
    </source>
</evidence>
<evidence type="ECO:0000256" key="2">
    <source>
        <dbReference type="SAM" id="MobiDB-lite"/>
    </source>
</evidence>
<dbReference type="EMBL" id="CU458896">
    <property type="protein sequence ID" value="CAM63207.1"/>
    <property type="molecule type" value="Genomic_DNA"/>
</dbReference>
<dbReference type="RefSeq" id="WP_005076703.1">
    <property type="nucleotide sequence ID" value="NZ_MLCG01000003.1"/>
</dbReference>
<dbReference type="SMR" id="B1MD86"/>
<dbReference type="GeneID" id="93380062"/>
<dbReference type="KEGG" id="mab:MAB_3130c"/>
<dbReference type="Proteomes" id="UP000007137">
    <property type="component" value="Chromosome"/>
</dbReference>
<dbReference type="GO" id="GO:0005829">
    <property type="term" value="C:cytosol"/>
    <property type="evidence" value="ECO:0007669"/>
    <property type="project" value="TreeGrafter"/>
</dbReference>
<dbReference type="GO" id="GO:0043024">
    <property type="term" value="F:ribosomal small subunit binding"/>
    <property type="evidence" value="ECO:0007669"/>
    <property type="project" value="TreeGrafter"/>
</dbReference>
<dbReference type="GO" id="GO:0030490">
    <property type="term" value="P:maturation of SSU-rRNA"/>
    <property type="evidence" value="ECO:0007669"/>
    <property type="project" value="UniProtKB-UniRule"/>
</dbReference>
<dbReference type="FunFam" id="3.30.300.20:FF:000018">
    <property type="entry name" value="Ribosome-binding factor A"/>
    <property type="match status" value="1"/>
</dbReference>
<dbReference type="Gene3D" id="3.30.300.20">
    <property type="match status" value="1"/>
</dbReference>
<dbReference type="HAMAP" id="MF_00003">
    <property type="entry name" value="RbfA"/>
    <property type="match status" value="1"/>
</dbReference>
<dbReference type="InterPro" id="IPR015946">
    <property type="entry name" value="KH_dom-like_a/b"/>
</dbReference>
<dbReference type="InterPro" id="IPR000238">
    <property type="entry name" value="RbfA"/>
</dbReference>
<dbReference type="InterPro" id="IPR023799">
    <property type="entry name" value="RbfA_dom_sf"/>
</dbReference>
<dbReference type="InterPro" id="IPR020053">
    <property type="entry name" value="Ribosome-bd_factorA_CS"/>
</dbReference>
<dbReference type="NCBIfam" id="TIGR00082">
    <property type="entry name" value="rbfA"/>
    <property type="match status" value="1"/>
</dbReference>
<dbReference type="PANTHER" id="PTHR33515">
    <property type="entry name" value="RIBOSOME-BINDING FACTOR A, CHLOROPLASTIC-RELATED"/>
    <property type="match status" value="1"/>
</dbReference>
<dbReference type="PANTHER" id="PTHR33515:SF1">
    <property type="entry name" value="RIBOSOME-BINDING FACTOR A, CHLOROPLASTIC-RELATED"/>
    <property type="match status" value="1"/>
</dbReference>
<dbReference type="Pfam" id="PF02033">
    <property type="entry name" value="RBFA"/>
    <property type="match status" value="1"/>
</dbReference>
<dbReference type="SUPFAM" id="SSF89919">
    <property type="entry name" value="Ribosome-binding factor A, RbfA"/>
    <property type="match status" value="1"/>
</dbReference>
<dbReference type="PROSITE" id="PS01319">
    <property type="entry name" value="RBFA"/>
    <property type="match status" value="1"/>
</dbReference>
<keyword id="KW-0963">Cytoplasm</keyword>
<keyword id="KW-1185">Reference proteome</keyword>
<keyword id="KW-0690">Ribosome biogenesis</keyword>
<name>RBFA_MYCA9</name>
<gene>
    <name evidence="1" type="primary">rbfA</name>
    <name type="ordered locus">MAB_3130c</name>
</gene>
<feature type="chain" id="PRO_1000088905" description="Ribosome-binding factor A">
    <location>
        <begin position="1"/>
        <end position="158"/>
    </location>
</feature>
<feature type="region of interest" description="Disordered" evidence="2">
    <location>
        <begin position="127"/>
        <end position="158"/>
    </location>
</feature>
<feature type="compositionally biased region" description="Basic and acidic residues" evidence="2">
    <location>
        <begin position="134"/>
        <end position="143"/>
    </location>
</feature>
<proteinExistence type="inferred from homology"/>
<protein>
    <recommendedName>
        <fullName evidence="1">Ribosome-binding factor A</fullName>
    </recommendedName>
</protein>
<reference key="1">
    <citation type="journal article" date="2009" name="PLoS ONE">
        <title>Non mycobacterial virulence genes in the genome of the emerging pathogen Mycobacterium abscessus.</title>
        <authorList>
            <person name="Ripoll F."/>
            <person name="Pasek S."/>
            <person name="Schenowitz C."/>
            <person name="Dossat C."/>
            <person name="Barbe V."/>
            <person name="Rottman M."/>
            <person name="Macheras E."/>
            <person name="Heym B."/>
            <person name="Herrmann J.L."/>
            <person name="Daffe M."/>
            <person name="Brosch R."/>
            <person name="Risler J.L."/>
            <person name="Gaillard J.L."/>
        </authorList>
    </citation>
    <scope>NUCLEOTIDE SEQUENCE [LARGE SCALE GENOMIC DNA]</scope>
    <source>
        <strain>ATCC 19977 / DSM 44196 / CCUG 20993 / CIP 104536 / JCM 13569 / NCTC 13031 / TMC 1543 / L948</strain>
    </source>
</reference>
<comment type="function">
    <text evidence="1">One of several proteins that assist in the late maturation steps of the functional core of the 30S ribosomal subunit. Associates with free 30S ribosomal subunits (but not with 30S subunits that are part of 70S ribosomes or polysomes). Required for efficient processing of 16S rRNA. May interact with the 5'-terminal helix region of 16S rRNA.</text>
</comment>
<comment type="subunit">
    <text evidence="1">Monomer. Binds 30S ribosomal subunits, but not 50S ribosomal subunits or 70S ribosomes.</text>
</comment>
<comment type="subcellular location">
    <subcellularLocation>
        <location evidence="1">Cytoplasm</location>
    </subcellularLocation>
</comment>
<comment type="similarity">
    <text evidence="1">Belongs to the RbfA family.</text>
</comment>
<organism>
    <name type="scientific">Mycobacteroides abscessus (strain ATCC 19977 / DSM 44196 / CCUG 20993 / CIP 104536 / JCM 13569 / NCTC 13031 / TMC 1543 / L948)</name>
    <name type="common">Mycobacterium abscessus</name>
    <dbReference type="NCBI Taxonomy" id="561007"/>
    <lineage>
        <taxon>Bacteria</taxon>
        <taxon>Bacillati</taxon>
        <taxon>Actinomycetota</taxon>
        <taxon>Actinomycetes</taxon>
        <taxon>Mycobacteriales</taxon>
        <taxon>Mycobacteriaceae</taxon>
        <taxon>Mycobacteroides</taxon>
        <taxon>Mycobacteroides abscessus</taxon>
    </lineage>
</organism>
<accession>B1MD86</accession>
<sequence length="158" mass="17052">MADPARARRLAKRIGAIVASAIEYEIKDPRLTMVTVTDTRVTNDLHDATVYYTVMGQTLSDEPDFAGAAAALDKAKGVLRTKVGAGTGVRFTPTLTFVLDTMADSARHMEELLDRTRAADAALAEVRQGAVHAGDADPYKESAAEEPAAYEDDERRPD</sequence>